<comment type="function">
    <text evidence="1">Forms part of the ribosomal stalk which helps the ribosome interact with GTP-bound translation factors. Is thus essential for accurate translation.</text>
</comment>
<comment type="subunit">
    <text evidence="1">Homodimer. Part of the ribosomal stalk of the 50S ribosomal subunit. Forms a multimeric L10(L12)X complex, where L10 forms an elongated spine to which 2 to 4 L12 dimers bind in a sequential fashion. Binds GTP-bound translation factors.</text>
</comment>
<comment type="similarity">
    <text evidence="1">Belongs to the bacterial ribosomal protein bL12 family.</text>
</comment>
<proteinExistence type="inferred from homology"/>
<sequence>MAITKEDVLEFISNLSVLELSELVKEFEEKFGVSAAPVMVAGAAGGAAVEAAEEKTEFNIVLVDAGDKKINVIKVVRALTGLGLKEAKDAVEGTPSVLKEGVSKDEAEAAKKELEEAGAKVELK</sequence>
<gene>
    <name evidence="1" type="primary">rplL</name>
    <name type="ordered locus">CFF8240_1317</name>
</gene>
<reference key="1">
    <citation type="submission" date="2006-11" db="EMBL/GenBank/DDBJ databases">
        <title>Sequence of Campylobacter fetus subsp. fetus 82-40.</title>
        <authorList>
            <person name="Fouts D.E."/>
            <person name="Nelson K.E."/>
        </authorList>
    </citation>
    <scope>NUCLEOTIDE SEQUENCE [LARGE SCALE GENOMIC DNA]</scope>
    <source>
        <strain>82-40</strain>
    </source>
</reference>
<feature type="chain" id="PRO_1000006980" description="Large ribosomal subunit protein bL12">
    <location>
        <begin position="1"/>
        <end position="124"/>
    </location>
</feature>
<protein>
    <recommendedName>
        <fullName evidence="1">Large ribosomal subunit protein bL12</fullName>
    </recommendedName>
    <alternativeName>
        <fullName evidence="2">50S ribosomal protein L7/L12</fullName>
    </alternativeName>
</protein>
<accession>A0RQI6</accession>
<name>RL7_CAMFF</name>
<organism>
    <name type="scientific">Campylobacter fetus subsp. fetus (strain 82-40)</name>
    <dbReference type="NCBI Taxonomy" id="360106"/>
    <lineage>
        <taxon>Bacteria</taxon>
        <taxon>Pseudomonadati</taxon>
        <taxon>Campylobacterota</taxon>
        <taxon>Epsilonproteobacteria</taxon>
        <taxon>Campylobacterales</taxon>
        <taxon>Campylobacteraceae</taxon>
        <taxon>Campylobacter</taxon>
    </lineage>
</organism>
<evidence type="ECO:0000255" key="1">
    <source>
        <dbReference type="HAMAP-Rule" id="MF_00368"/>
    </source>
</evidence>
<evidence type="ECO:0000305" key="2"/>
<keyword id="KW-0687">Ribonucleoprotein</keyword>
<keyword id="KW-0689">Ribosomal protein</keyword>
<dbReference type="EMBL" id="CP000487">
    <property type="protein sequence ID" value="ABK82379.1"/>
    <property type="molecule type" value="Genomic_DNA"/>
</dbReference>
<dbReference type="RefSeq" id="WP_002850115.1">
    <property type="nucleotide sequence ID" value="NC_008599.1"/>
</dbReference>
<dbReference type="SMR" id="A0RQI6"/>
<dbReference type="GeneID" id="61065135"/>
<dbReference type="KEGG" id="cff:CFF8240_1317"/>
<dbReference type="eggNOG" id="COG0222">
    <property type="taxonomic scope" value="Bacteria"/>
</dbReference>
<dbReference type="HOGENOM" id="CLU_086499_3_0_7"/>
<dbReference type="Proteomes" id="UP000000760">
    <property type="component" value="Chromosome"/>
</dbReference>
<dbReference type="GO" id="GO:0022625">
    <property type="term" value="C:cytosolic large ribosomal subunit"/>
    <property type="evidence" value="ECO:0007669"/>
    <property type="project" value="TreeGrafter"/>
</dbReference>
<dbReference type="GO" id="GO:0003729">
    <property type="term" value="F:mRNA binding"/>
    <property type="evidence" value="ECO:0007669"/>
    <property type="project" value="TreeGrafter"/>
</dbReference>
<dbReference type="GO" id="GO:0003735">
    <property type="term" value="F:structural constituent of ribosome"/>
    <property type="evidence" value="ECO:0007669"/>
    <property type="project" value="InterPro"/>
</dbReference>
<dbReference type="GO" id="GO:0006412">
    <property type="term" value="P:translation"/>
    <property type="evidence" value="ECO:0007669"/>
    <property type="project" value="UniProtKB-UniRule"/>
</dbReference>
<dbReference type="CDD" id="cd00387">
    <property type="entry name" value="Ribosomal_L7_L12"/>
    <property type="match status" value="1"/>
</dbReference>
<dbReference type="FunFam" id="3.30.1390.10:FF:000001">
    <property type="entry name" value="50S ribosomal protein L7/L12"/>
    <property type="match status" value="1"/>
</dbReference>
<dbReference type="Gene3D" id="3.30.1390.10">
    <property type="match status" value="1"/>
</dbReference>
<dbReference type="Gene3D" id="1.20.5.710">
    <property type="entry name" value="Single helix bin"/>
    <property type="match status" value="1"/>
</dbReference>
<dbReference type="HAMAP" id="MF_00368">
    <property type="entry name" value="Ribosomal_bL12"/>
    <property type="match status" value="1"/>
</dbReference>
<dbReference type="InterPro" id="IPR000206">
    <property type="entry name" value="Ribosomal_bL12"/>
</dbReference>
<dbReference type="InterPro" id="IPR013823">
    <property type="entry name" value="Ribosomal_bL12_C"/>
</dbReference>
<dbReference type="InterPro" id="IPR014719">
    <property type="entry name" value="Ribosomal_bL12_C/ClpS-like"/>
</dbReference>
<dbReference type="InterPro" id="IPR008932">
    <property type="entry name" value="Ribosomal_bL12_oligo"/>
</dbReference>
<dbReference type="InterPro" id="IPR036235">
    <property type="entry name" value="Ribosomal_bL12_oligo_N_sf"/>
</dbReference>
<dbReference type="NCBIfam" id="TIGR00855">
    <property type="entry name" value="L12"/>
    <property type="match status" value="1"/>
</dbReference>
<dbReference type="PANTHER" id="PTHR45987">
    <property type="entry name" value="39S RIBOSOMAL PROTEIN L12"/>
    <property type="match status" value="1"/>
</dbReference>
<dbReference type="PANTHER" id="PTHR45987:SF4">
    <property type="entry name" value="LARGE RIBOSOMAL SUBUNIT PROTEIN BL12M"/>
    <property type="match status" value="1"/>
</dbReference>
<dbReference type="Pfam" id="PF00542">
    <property type="entry name" value="Ribosomal_L12"/>
    <property type="match status" value="1"/>
</dbReference>
<dbReference type="Pfam" id="PF16320">
    <property type="entry name" value="Ribosomal_L12_N"/>
    <property type="match status" value="1"/>
</dbReference>
<dbReference type="SUPFAM" id="SSF54736">
    <property type="entry name" value="ClpS-like"/>
    <property type="match status" value="1"/>
</dbReference>
<dbReference type="SUPFAM" id="SSF48300">
    <property type="entry name" value="Ribosomal protein L7/12, oligomerisation (N-terminal) domain"/>
    <property type="match status" value="1"/>
</dbReference>